<organism>
    <name type="scientific">Lactococcus lactis subsp. cremoris (strain MG1363)</name>
    <dbReference type="NCBI Taxonomy" id="416870"/>
    <lineage>
        <taxon>Bacteria</taxon>
        <taxon>Bacillati</taxon>
        <taxon>Bacillota</taxon>
        <taxon>Bacilli</taxon>
        <taxon>Lactobacillales</taxon>
        <taxon>Streptococcaceae</taxon>
        <taxon>Lactococcus</taxon>
        <taxon>Lactococcus cremoris subsp. cremoris</taxon>
    </lineage>
</organism>
<feature type="chain" id="PRO_1000054481" description="Large ribosomal subunit protein uL15">
    <location>
        <begin position="1"/>
        <end position="147"/>
    </location>
</feature>
<feature type="region of interest" description="Disordered" evidence="2">
    <location>
        <begin position="1"/>
        <end position="57"/>
    </location>
</feature>
<feature type="compositionally biased region" description="Basic and acidic residues" evidence="2">
    <location>
        <begin position="1"/>
        <end position="13"/>
    </location>
</feature>
<feature type="compositionally biased region" description="Gly residues" evidence="2">
    <location>
        <begin position="23"/>
        <end position="35"/>
    </location>
</feature>
<feature type="compositionally biased region" description="Gly residues" evidence="2">
    <location>
        <begin position="42"/>
        <end position="52"/>
    </location>
</feature>
<gene>
    <name evidence="1" type="primary">rplO</name>
    <name type="ordered locus">llmg_2362</name>
</gene>
<sequence>MELHSLKAAEGSRKVRNRVGRGTSSGNGKTSGRGQKGQKSRSGGGVRPGFEGGQTELFRRMPKRGFLNVNRKEYAIVNLETLNRLEDGATVSAETLVAAKIVKDVKSGVKVLANGELTAKNLTVKVAKVSAAAKAAIEAAGGSVEEA</sequence>
<dbReference type="EMBL" id="AM406671">
    <property type="protein sequence ID" value="CAL98925.1"/>
    <property type="molecule type" value="Genomic_DNA"/>
</dbReference>
<dbReference type="RefSeq" id="WP_011677151.1">
    <property type="nucleotide sequence ID" value="NC_009004.1"/>
</dbReference>
<dbReference type="PDB" id="5MYJ">
    <property type="method" value="EM"/>
    <property type="resolution" value="5.60 A"/>
    <property type="chains" value="BO=1-147"/>
</dbReference>
<dbReference type="PDBsum" id="5MYJ"/>
<dbReference type="EMDB" id="EMD-3581"/>
<dbReference type="SMR" id="A2RNN4"/>
<dbReference type="STRING" id="416870.llmg_2362"/>
<dbReference type="GeneID" id="61110407"/>
<dbReference type="KEGG" id="llm:llmg_2362"/>
<dbReference type="eggNOG" id="COG0200">
    <property type="taxonomic scope" value="Bacteria"/>
</dbReference>
<dbReference type="HOGENOM" id="CLU_055188_4_2_9"/>
<dbReference type="OrthoDB" id="9810293at2"/>
<dbReference type="PhylomeDB" id="A2RNN4"/>
<dbReference type="Proteomes" id="UP000000364">
    <property type="component" value="Chromosome"/>
</dbReference>
<dbReference type="GO" id="GO:0022625">
    <property type="term" value="C:cytosolic large ribosomal subunit"/>
    <property type="evidence" value="ECO:0007669"/>
    <property type="project" value="TreeGrafter"/>
</dbReference>
<dbReference type="GO" id="GO:0019843">
    <property type="term" value="F:rRNA binding"/>
    <property type="evidence" value="ECO:0007669"/>
    <property type="project" value="UniProtKB-UniRule"/>
</dbReference>
<dbReference type="GO" id="GO:0003735">
    <property type="term" value="F:structural constituent of ribosome"/>
    <property type="evidence" value="ECO:0007669"/>
    <property type="project" value="InterPro"/>
</dbReference>
<dbReference type="GO" id="GO:0006412">
    <property type="term" value="P:translation"/>
    <property type="evidence" value="ECO:0007669"/>
    <property type="project" value="UniProtKB-UniRule"/>
</dbReference>
<dbReference type="Gene3D" id="3.100.10.10">
    <property type="match status" value="1"/>
</dbReference>
<dbReference type="HAMAP" id="MF_01341">
    <property type="entry name" value="Ribosomal_uL15"/>
    <property type="match status" value="1"/>
</dbReference>
<dbReference type="InterPro" id="IPR030878">
    <property type="entry name" value="Ribosomal_uL15"/>
</dbReference>
<dbReference type="InterPro" id="IPR021131">
    <property type="entry name" value="Ribosomal_uL15/eL18"/>
</dbReference>
<dbReference type="InterPro" id="IPR036227">
    <property type="entry name" value="Ribosomal_uL15/eL18_sf"/>
</dbReference>
<dbReference type="InterPro" id="IPR005749">
    <property type="entry name" value="Ribosomal_uL15_bac-type"/>
</dbReference>
<dbReference type="InterPro" id="IPR001196">
    <property type="entry name" value="Ribosomal_uL15_CS"/>
</dbReference>
<dbReference type="NCBIfam" id="TIGR01071">
    <property type="entry name" value="rplO_bact"/>
    <property type="match status" value="1"/>
</dbReference>
<dbReference type="PANTHER" id="PTHR12934">
    <property type="entry name" value="50S RIBOSOMAL PROTEIN L15"/>
    <property type="match status" value="1"/>
</dbReference>
<dbReference type="PANTHER" id="PTHR12934:SF11">
    <property type="entry name" value="LARGE RIBOSOMAL SUBUNIT PROTEIN UL15M"/>
    <property type="match status" value="1"/>
</dbReference>
<dbReference type="Pfam" id="PF00828">
    <property type="entry name" value="Ribosomal_L27A"/>
    <property type="match status" value="1"/>
</dbReference>
<dbReference type="SUPFAM" id="SSF52080">
    <property type="entry name" value="Ribosomal proteins L15p and L18e"/>
    <property type="match status" value="1"/>
</dbReference>
<dbReference type="PROSITE" id="PS00475">
    <property type="entry name" value="RIBOSOMAL_L15"/>
    <property type="match status" value="1"/>
</dbReference>
<proteinExistence type="evidence at protein level"/>
<name>RL15_LACLM</name>
<accession>A2RNN4</accession>
<evidence type="ECO:0000255" key="1">
    <source>
        <dbReference type="HAMAP-Rule" id="MF_01341"/>
    </source>
</evidence>
<evidence type="ECO:0000256" key="2">
    <source>
        <dbReference type="SAM" id="MobiDB-lite"/>
    </source>
</evidence>
<evidence type="ECO:0000305" key="3"/>
<reference key="1">
    <citation type="journal article" date="2007" name="J. Bacteriol.">
        <title>The complete genome sequence of the lactic acid bacterial paradigm Lactococcus lactis subsp. cremoris MG1363.</title>
        <authorList>
            <person name="Wegmann U."/>
            <person name="O'Connell-Motherway M."/>
            <person name="Zomer A."/>
            <person name="Buist G."/>
            <person name="Shearman C."/>
            <person name="Canchaya C."/>
            <person name="Ventura M."/>
            <person name="Goesmann A."/>
            <person name="Gasson M.J."/>
            <person name="Kuipers O.P."/>
            <person name="van Sinderen D."/>
            <person name="Kok J."/>
        </authorList>
    </citation>
    <scope>NUCLEOTIDE SEQUENCE [LARGE SCALE GENOMIC DNA]</scope>
    <source>
        <strain>MG1363</strain>
    </source>
</reference>
<comment type="function">
    <text evidence="1">Binds to the 23S rRNA.</text>
</comment>
<comment type="subunit">
    <text evidence="1">Part of the 50S ribosomal subunit.</text>
</comment>
<comment type="similarity">
    <text evidence="1">Belongs to the universal ribosomal protein uL15 family.</text>
</comment>
<keyword id="KW-0002">3D-structure</keyword>
<keyword id="KW-0687">Ribonucleoprotein</keyword>
<keyword id="KW-0689">Ribosomal protein</keyword>
<keyword id="KW-0694">RNA-binding</keyword>
<keyword id="KW-0699">rRNA-binding</keyword>
<protein>
    <recommendedName>
        <fullName evidence="1">Large ribosomal subunit protein uL15</fullName>
    </recommendedName>
    <alternativeName>
        <fullName evidence="3">50S ribosomal protein L15</fullName>
    </alternativeName>
</protein>